<dbReference type="EMBL" id="AJ421517">
    <property type="protein sequence ID" value="CAD13435.1"/>
    <property type="molecule type" value="Genomic_DNA"/>
</dbReference>
<dbReference type="SMR" id="Q8VLP6"/>
<dbReference type="STRING" id="29486.UGYR_00495"/>
<dbReference type="MEROPS" id="I38.001"/>
<dbReference type="eggNOG" id="ENOG50301S2">
    <property type="taxonomic scope" value="Bacteria"/>
</dbReference>
<dbReference type="GO" id="GO:0042597">
    <property type="term" value="C:periplasmic space"/>
    <property type="evidence" value="ECO:0007669"/>
    <property type="project" value="UniProtKB-SubCell"/>
</dbReference>
<dbReference type="GO" id="GO:0008191">
    <property type="term" value="F:metalloendopeptidase inhibitor activity"/>
    <property type="evidence" value="ECO:0007669"/>
    <property type="project" value="InterPro"/>
</dbReference>
<dbReference type="Gene3D" id="2.40.128.10">
    <property type="match status" value="1"/>
</dbReference>
<dbReference type="InterPro" id="IPR022815">
    <property type="entry name" value="Inh"/>
</dbReference>
<dbReference type="InterPro" id="IPR021140">
    <property type="entry name" value="Inh/Omp19"/>
</dbReference>
<dbReference type="InterPro" id="IPR016085">
    <property type="entry name" value="Protease_inh_b-brl_dom"/>
</dbReference>
<dbReference type="Pfam" id="PF02974">
    <property type="entry name" value="Inh"/>
    <property type="match status" value="1"/>
</dbReference>
<dbReference type="PRINTS" id="PR01274">
    <property type="entry name" value="MPTASEINHBTR"/>
</dbReference>
<dbReference type="SUPFAM" id="SSF50882">
    <property type="entry name" value="beta-Barrel protease inhibitors"/>
    <property type="match status" value="1"/>
</dbReference>
<accession>Q8VLP6</accession>
<sequence length="124" mass="13336">MPILVVLTLMSSGEIMASSLVLPKVGDLSGQWQLQLNVSGAKICDIELKNTPITPDLIWHASGDTDCLSQLLGSAPQGWRPTPDGIMLTDETGSAVAFFERAQNGYENTLPDDAGVIVLRRVQE</sequence>
<name>INH_YERRU</name>
<feature type="signal peptide" evidence="2">
    <location>
        <begin position="1"/>
        <end position="17"/>
    </location>
</feature>
<feature type="chain" id="PRO_0000026722" description="Alkaline proteinase inhibitor">
    <location>
        <begin position="18"/>
        <end position="124"/>
    </location>
</feature>
<feature type="disulfide bond" evidence="1">
    <location>
        <begin position="44"/>
        <end position="67"/>
    </location>
</feature>
<protein>
    <recommendedName>
        <fullName>Alkaline proteinase inhibitor</fullName>
    </recommendedName>
    <alternativeName>
        <fullName>Metalloprotease inhibitor</fullName>
    </alternativeName>
</protein>
<reference key="1">
    <citation type="submission" date="2001-12" db="EMBL/GenBank/DDBJ databases">
        <title>Cloning and sequencing of metalloprotease Yrp1 from the fish pathogen Yersinia ruckeri.</title>
        <authorList>
            <person name="Fernandez L."/>
        </authorList>
    </citation>
    <scope>NUCLEOTIDE SEQUENCE [GENOMIC DNA]</scope>
    <source>
        <strain>150</strain>
    </source>
</reference>
<comment type="function">
    <text evidence="1">Inhibitor of the alkaline protease.</text>
</comment>
<comment type="subcellular location">
    <subcellularLocation>
        <location evidence="1">Periplasm</location>
    </subcellularLocation>
</comment>
<comment type="similarity">
    <text evidence="3">Belongs to the protease inhibitor I38 family.</text>
</comment>
<proteinExistence type="inferred from homology"/>
<gene>
    <name type="primary">inh</name>
</gene>
<keyword id="KW-1015">Disulfide bond</keyword>
<keyword id="KW-0481">Metalloenzyme inhibitor</keyword>
<keyword id="KW-0483">Metalloprotease inhibitor</keyword>
<keyword id="KW-0574">Periplasm</keyword>
<keyword id="KW-0646">Protease inhibitor</keyword>
<keyword id="KW-0732">Signal</keyword>
<organism>
    <name type="scientific">Yersinia ruckeri</name>
    <dbReference type="NCBI Taxonomy" id="29486"/>
    <lineage>
        <taxon>Bacteria</taxon>
        <taxon>Pseudomonadati</taxon>
        <taxon>Pseudomonadota</taxon>
        <taxon>Gammaproteobacteria</taxon>
        <taxon>Enterobacterales</taxon>
        <taxon>Yersiniaceae</taxon>
        <taxon>Yersinia</taxon>
    </lineage>
</organism>
<evidence type="ECO:0000250" key="1"/>
<evidence type="ECO:0000255" key="2"/>
<evidence type="ECO:0000305" key="3"/>